<accession>Q8FIB8</accession>
<evidence type="ECO:0000250" key="1"/>
<evidence type="ECO:0000255" key="2"/>
<evidence type="ECO:0000255" key="3">
    <source>
        <dbReference type="PROSITE-ProRule" id="PRU00102"/>
    </source>
</evidence>
<evidence type="ECO:0000255" key="4">
    <source>
        <dbReference type="PROSITE-ProRule" id="PRU00107"/>
    </source>
</evidence>
<proteinExistence type="inferred from homology"/>
<protein>
    <recommendedName>
        <fullName>Sensor protein PhoQ</fullName>
        <ecNumber>2.7.13.3</ecNumber>
        <ecNumber>3.1.3.-</ecNumber>
    </recommendedName>
    <alternativeName>
        <fullName>Sensor histidine protein kinase/phosphatase PhoQ</fullName>
    </alternativeName>
</protein>
<reference key="1">
    <citation type="journal article" date="2002" name="Proc. Natl. Acad. Sci. U.S.A.">
        <title>Extensive mosaic structure revealed by the complete genome sequence of uropathogenic Escherichia coli.</title>
        <authorList>
            <person name="Welch R.A."/>
            <person name="Burland V."/>
            <person name="Plunkett G. III"/>
            <person name="Redford P."/>
            <person name="Roesch P."/>
            <person name="Rasko D."/>
            <person name="Buckles E.L."/>
            <person name="Liou S.-R."/>
            <person name="Boutin A."/>
            <person name="Hackett J."/>
            <person name="Stroud D."/>
            <person name="Mayhew G.F."/>
            <person name="Rose D.J."/>
            <person name="Zhou S."/>
            <person name="Schwartz D.C."/>
            <person name="Perna N.T."/>
            <person name="Mobley H.L.T."/>
            <person name="Donnenberg M.S."/>
            <person name="Blattner F.R."/>
        </authorList>
    </citation>
    <scope>NUCLEOTIDE SEQUENCE [LARGE SCALE GENOMIC DNA]</scope>
    <source>
        <strain>CFT073 / ATCC 700928 / UPEC</strain>
    </source>
</reference>
<comment type="function">
    <text evidence="1">Member of the two-component regulatory system PhoP/PhoQ involved in virulence, adaptation to low Mg(2+) environments and the control of acid resistance genes. In low periplasmic Mg(2+), PhoQ functions as a membrane-associated protein kinase that undergoes autophosphorylation and subsequently transfers the phosphate to PhoP, resulting in the expression of PhoP-activated genes (PAG) and repression of PhoP-repressed genes (PRG). In high periplasmic Mg(2+), acts as a protein phosphatase that dephosphorylates phospho-PhoP, which results in the repression of PG and may lead to expression of some PRG (By similarity).</text>
</comment>
<comment type="catalytic activity">
    <reaction>
        <text>ATP + protein L-histidine = ADP + protein N-phospho-L-histidine.</text>
        <dbReference type="EC" id="2.7.13.3"/>
    </reaction>
</comment>
<comment type="subunit">
    <text evidence="1">Homodimer.</text>
</comment>
<comment type="subcellular location">
    <subcellularLocation>
        <location evidence="1">Cell inner membrane</location>
        <topology evidence="1">Multi-pass membrane protein</topology>
    </subcellularLocation>
</comment>
<keyword id="KW-0067">ATP-binding</keyword>
<keyword id="KW-0997">Cell inner membrane</keyword>
<keyword id="KW-1003">Cell membrane</keyword>
<keyword id="KW-0378">Hydrolase</keyword>
<keyword id="KW-0418">Kinase</keyword>
<keyword id="KW-0460">Magnesium</keyword>
<keyword id="KW-0472">Membrane</keyword>
<keyword id="KW-0479">Metal-binding</keyword>
<keyword id="KW-0547">Nucleotide-binding</keyword>
<keyword id="KW-0597">Phosphoprotein</keyword>
<keyword id="KW-0904">Protein phosphatase</keyword>
<keyword id="KW-1185">Reference proteome</keyword>
<keyword id="KW-0808">Transferase</keyword>
<keyword id="KW-0812">Transmembrane</keyword>
<keyword id="KW-1133">Transmembrane helix</keyword>
<keyword id="KW-0902">Two-component regulatory system</keyword>
<sequence>MKKLLHLFFPLSLRVRFLLATAAVVLVLSLAYGMVALIGYSVSFDKTTFRLLRGESNLFYTLAKWENNKLHVELPENIDKQSPTMTLIYDENGQLLWAQRDVPWLMKMIQPDWLKSNGFHEIEADVNDTSLLLSGDHSIQQQLQEVREDDDDAEMTHSVAVNVYPATSRMPKLTIVVVDTIPVELKSSYMVWSWFIYVLSANLLLVIPLLWVAAWWSLRPIEALAKEVRELEEHNRELLNPATTRELTSLVRNLNRLLKSERERYDKYRTTLTDLTHSLKTPLAVLQSTLRSLRSEKMSVSDAEPVMLEQISRISQQIGYYLHRASMRGGTLLSRELHPVAPLLDNLTSALNKVYQRKGVNISLDISPEISFVGEQNDFVEVMGNVLDNACKYCLEFVEISARQTDEHLYIVVEDDGPGIPLSKREVIFDRGQRVDTLRPGQGVGLAVAREITEQYEGKIVAGESMLGGARMEVIFGRQHSAPKDE</sequence>
<gene>
    <name type="primary">phoQ</name>
    <name type="ordered locus">c1508</name>
</gene>
<organism>
    <name type="scientific">Escherichia coli O6:H1 (strain CFT073 / ATCC 700928 / UPEC)</name>
    <dbReference type="NCBI Taxonomy" id="199310"/>
    <lineage>
        <taxon>Bacteria</taxon>
        <taxon>Pseudomonadati</taxon>
        <taxon>Pseudomonadota</taxon>
        <taxon>Gammaproteobacteria</taxon>
        <taxon>Enterobacterales</taxon>
        <taxon>Enterobacteriaceae</taxon>
        <taxon>Escherichia</taxon>
    </lineage>
</organism>
<name>PHOQ_ECOL6</name>
<dbReference type="EC" id="2.7.13.3"/>
<dbReference type="EC" id="3.1.3.-"/>
<dbReference type="EMBL" id="AE014075">
    <property type="protein sequence ID" value="AAN79977.1"/>
    <property type="molecule type" value="Genomic_DNA"/>
</dbReference>
<dbReference type="RefSeq" id="WP_000734671.1">
    <property type="nucleotide sequence ID" value="NZ_CP051263.1"/>
</dbReference>
<dbReference type="SMR" id="Q8FIB8"/>
<dbReference type="STRING" id="199310.c1508"/>
<dbReference type="KEGG" id="ecc:c1508"/>
<dbReference type="eggNOG" id="COG2205">
    <property type="taxonomic scope" value="Bacteria"/>
</dbReference>
<dbReference type="HOGENOM" id="CLU_000445_42_0_6"/>
<dbReference type="BioCyc" id="ECOL199310:C1508-MONOMER"/>
<dbReference type="BRENDA" id="2.7.13.3">
    <property type="organism ID" value="2026"/>
</dbReference>
<dbReference type="Proteomes" id="UP000001410">
    <property type="component" value="Chromosome"/>
</dbReference>
<dbReference type="GO" id="GO:0005886">
    <property type="term" value="C:plasma membrane"/>
    <property type="evidence" value="ECO:0007669"/>
    <property type="project" value="UniProtKB-SubCell"/>
</dbReference>
<dbReference type="GO" id="GO:0005524">
    <property type="term" value="F:ATP binding"/>
    <property type="evidence" value="ECO:0007669"/>
    <property type="project" value="UniProtKB-KW"/>
</dbReference>
<dbReference type="GO" id="GO:0046872">
    <property type="term" value="F:metal ion binding"/>
    <property type="evidence" value="ECO:0007669"/>
    <property type="project" value="UniProtKB-KW"/>
</dbReference>
<dbReference type="GO" id="GO:0004721">
    <property type="term" value="F:phosphoprotein phosphatase activity"/>
    <property type="evidence" value="ECO:0007669"/>
    <property type="project" value="UniProtKB-KW"/>
</dbReference>
<dbReference type="GO" id="GO:0000155">
    <property type="term" value="F:phosphorelay sensor kinase activity"/>
    <property type="evidence" value="ECO:0007669"/>
    <property type="project" value="InterPro"/>
</dbReference>
<dbReference type="CDD" id="cd16954">
    <property type="entry name" value="HATPase_PhoQ-like"/>
    <property type="match status" value="1"/>
</dbReference>
<dbReference type="FunFam" id="1.10.287.130:FF:000013">
    <property type="entry name" value="Sensor histidine kinase PhoQ"/>
    <property type="match status" value="1"/>
</dbReference>
<dbReference type="FunFam" id="3.30.450.140:FF:000001">
    <property type="entry name" value="Virulence sensor histidine kinase PhoQ"/>
    <property type="match status" value="1"/>
</dbReference>
<dbReference type="FunFam" id="3.30.565.10:FF:000019">
    <property type="entry name" value="Virulence sensor histidine kinase PhoQ"/>
    <property type="match status" value="1"/>
</dbReference>
<dbReference type="Gene3D" id="1.10.287.130">
    <property type="match status" value="1"/>
</dbReference>
<dbReference type="Gene3D" id="3.30.450.140">
    <property type="match status" value="1"/>
</dbReference>
<dbReference type="Gene3D" id="3.30.565.10">
    <property type="entry name" value="Histidine kinase-like ATPase, C-terminal domain"/>
    <property type="match status" value="1"/>
</dbReference>
<dbReference type="InterPro" id="IPR003660">
    <property type="entry name" value="HAMP_dom"/>
</dbReference>
<dbReference type="InterPro" id="IPR036890">
    <property type="entry name" value="HATPase_C_sf"/>
</dbReference>
<dbReference type="InterPro" id="IPR005467">
    <property type="entry name" value="His_kinase_dom"/>
</dbReference>
<dbReference type="InterPro" id="IPR036097">
    <property type="entry name" value="HisK_dim/P_sf"/>
</dbReference>
<dbReference type="InterPro" id="IPR015014">
    <property type="entry name" value="PhoQ_Sensor"/>
</dbReference>
<dbReference type="InterPro" id="IPR038429">
    <property type="entry name" value="PhoQ_Sensor_sf"/>
</dbReference>
<dbReference type="InterPro" id="IPR004358">
    <property type="entry name" value="Sig_transdc_His_kin-like_C"/>
</dbReference>
<dbReference type="InterPro" id="IPR050428">
    <property type="entry name" value="TCS_sensor_his_kinase"/>
</dbReference>
<dbReference type="NCBIfam" id="NF008077">
    <property type="entry name" value="PRK10815.1"/>
    <property type="match status" value="1"/>
</dbReference>
<dbReference type="PANTHER" id="PTHR45436">
    <property type="entry name" value="SENSOR HISTIDINE KINASE YKOH"/>
    <property type="match status" value="1"/>
</dbReference>
<dbReference type="PANTHER" id="PTHR45436:SF4">
    <property type="entry name" value="SENSOR PROTEIN PHOQ"/>
    <property type="match status" value="1"/>
</dbReference>
<dbReference type="Pfam" id="PF02518">
    <property type="entry name" value="HATPase_c"/>
    <property type="match status" value="1"/>
</dbReference>
<dbReference type="Pfam" id="PF08918">
    <property type="entry name" value="PhoQ_Sensor"/>
    <property type="match status" value="1"/>
</dbReference>
<dbReference type="PRINTS" id="PR00344">
    <property type="entry name" value="BCTRLSENSOR"/>
</dbReference>
<dbReference type="SMART" id="SM00387">
    <property type="entry name" value="HATPase_c"/>
    <property type="match status" value="1"/>
</dbReference>
<dbReference type="SUPFAM" id="SSF55874">
    <property type="entry name" value="ATPase domain of HSP90 chaperone/DNA topoisomerase II/histidine kinase"/>
    <property type="match status" value="1"/>
</dbReference>
<dbReference type="SUPFAM" id="SSF47384">
    <property type="entry name" value="Homodimeric domain of signal transducing histidine kinase"/>
    <property type="match status" value="1"/>
</dbReference>
<dbReference type="PROSITE" id="PS50885">
    <property type="entry name" value="HAMP"/>
    <property type="match status" value="1"/>
</dbReference>
<dbReference type="PROSITE" id="PS50109">
    <property type="entry name" value="HIS_KIN"/>
    <property type="match status" value="1"/>
</dbReference>
<feature type="chain" id="PRO_0000074839" description="Sensor protein PhoQ">
    <location>
        <begin position="1"/>
        <end position="486"/>
    </location>
</feature>
<feature type="topological domain" description="Cytoplasmic" evidence="2">
    <location>
        <begin position="1"/>
        <end position="16"/>
    </location>
</feature>
<feature type="transmembrane region" description="Helical" evidence="2">
    <location>
        <begin position="17"/>
        <end position="37"/>
    </location>
</feature>
<feature type="topological domain" description="Periplasmic" evidence="2">
    <location>
        <begin position="38"/>
        <end position="194"/>
    </location>
</feature>
<feature type="transmembrane region" description="Helical" evidence="2">
    <location>
        <begin position="195"/>
        <end position="215"/>
    </location>
</feature>
<feature type="topological domain" description="Cytoplasmic" evidence="2">
    <location>
        <begin position="216"/>
        <end position="486"/>
    </location>
</feature>
<feature type="domain" description="HAMP" evidence="3">
    <location>
        <begin position="215"/>
        <end position="266"/>
    </location>
</feature>
<feature type="domain" description="Histidine kinase" evidence="4">
    <location>
        <begin position="274"/>
        <end position="480"/>
    </location>
</feature>
<feature type="binding site" evidence="1">
    <location>
        <position position="151"/>
    </location>
    <ligand>
        <name>a divalent metal cation</name>
        <dbReference type="ChEBI" id="CHEBI:60240"/>
    </ligand>
</feature>
<feature type="binding site" evidence="1">
    <location>
        <position position="152"/>
    </location>
    <ligand>
        <name>a divalent metal cation</name>
        <dbReference type="ChEBI" id="CHEBI:60240"/>
    </ligand>
</feature>
<feature type="binding site" evidence="1">
    <location>
        <begin position="385"/>
        <end position="393"/>
    </location>
    <ligand>
        <name>ATP</name>
        <dbReference type="ChEBI" id="CHEBI:30616"/>
    </ligand>
</feature>
<feature type="binding site" evidence="1">
    <location>
        <position position="385"/>
    </location>
    <ligand>
        <name>Mg(2+)</name>
        <dbReference type="ChEBI" id="CHEBI:18420"/>
    </ligand>
</feature>
<feature type="binding site" evidence="1">
    <location>
        <begin position="415"/>
        <end position="420"/>
    </location>
    <ligand>
        <name>ATP</name>
        <dbReference type="ChEBI" id="CHEBI:30616"/>
    </ligand>
</feature>
<feature type="binding site" evidence="1">
    <location>
        <begin position="434"/>
        <end position="446"/>
    </location>
    <ligand>
        <name>ATP</name>
        <dbReference type="ChEBI" id="CHEBI:30616"/>
    </ligand>
</feature>
<feature type="binding site" evidence="1">
    <location>
        <position position="442"/>
    </location>
    <ligand>
        <name>Mg(2+)</name>
        <dbReference type="ChEBI" id="CHEBI:18420"/>
    </ligand>
</feature>
<feature type="site" description="Plays a critical role in the switching between kinase and phosphatase states" evidence="1">
    <location>
        <position position="202"/>
    </location>
</feature>
<feature type="modified residue" description="Phosphohistidine; by autocatalysis" evidence="4">
    <location>
        <position position="277"/>
    </location>
</feature>